<proteinExistence type="inferred from homology"/>
<reference key="1">
    <citation type="journal article" date="2009" name="Genome Res.">
        <title>Newly introduced genomic prophage islands are critical determinants of in vivo competitiveness in the Liverpool epidemic strain of Pseudomonas aeruginosa.</title>
        <authorList>
            <person name="Winstanley C."/>
            <person name="Langille M.G.I."/>
            <person name="Fothergill J.L."/>
            <person name="Kukavica-Ibrulj I."/>
            <person name="Paradis-Bleau C."/>
            <person name="Sanschagrin F."/>
            <person name="Thomson N.R."/>
            <person name="Winsor G.L."/>
            <person name="Quail M.A."/>
            <person name="Lennard N."/>
            <person name="Bignell A."/>
            <person name="Clarke L."/>
            <person name="Seeger K."/>
            <person name="Saunders D."/>
            <person name="Harris D."/>
            <person name="Parkhill J."/>
            <person name="Hancock R.E.W."/>
            <person name="Brinkman F.S.L."/>
            <person name="Levesque R.C."/>
        </authorList>
    </citation>
    <scope>NUCLEOTIDE SEQUENCE [LARGE SCALE GENOMIC DNA]</scope>
    <source>
        <strain>LESB58</strain>
    </source>
</reference>
<gene>
    <name evidence="1" type="primary">thiG</name>
    <name type="ordered locus">PLES_03781</name>
</gene>
<sequence>MSQASSTDTPFVIAGRTYGSRLLVGTGKYKDLDETRRAIEASGAEIVTVAVRRTNIGQNPDEPNLLDVIPPDRYTILPNTAGCYDAVEAVRTCRLARELLDGHNLVKLEVLADQKTLFPNVVETLKAAEQLVKDGFDVMVYTSDDPIIARQLAEIGCIAVMPLAGLIGSGLGICNPYNLRIILEEAKVPVLVDAGVGTASDAAIAMELGCEAVLMNTAIAHAKDPVMMAEAMKHAIVAGRLAYLAGRMPRKLYASASSPLDGLID</sequence>
<accession>B7V3W7</accession>
<keyword id="KW-0963">Cytoplasm</keyword>
<keyword id="KW-0704">Schiff base</keyword>
<keyword id="KW-0784">Thiamine biosynthesis</keyword>
<keyword id="KW-0808">Transferase</keyword>
<protein>
    <recommendedName>
        <fullName evidence="1">Thiazole synthase</fullName>
        <ecNumber evidence="1">2.8.1.10</ecNumber>
    </recommendedName>
</protein>
<dbReference type="EC" id="2.8.1.10" evidence="1"/>
<dbReference type="EMBL" id="FM209186">
    <property type="protein sequence ID" value="CAW25105.1"/>
    <property type="molecule type" value="Genomic_DNA"/>
</dbReference>
<dbReference type="RefSeq" id="WP_003084517.1">
    <property type="nucleotide sequence ID" value="NC_011770.1"/>
</dbReference>
<dbReference type="SMR" id="B7V3W7"/>
<dbReference type="KEGG" id="pag:PLES_03781"/>
<dbReference type="HOGENOM" id="CLU_062233_1_1_6"/>
<dbReference type="UniPathway" id="UPA00060"/>
<dbReference type="GO" id="GO:0005737">
    <property type="term" value="C:cytoplasm"/>
    <property type="evidence" value="ECO:0007669"/>
    <property type="project" value="UniProtKB-SubCell"/>
</dbReference>
<dbReference type="GO" id="GO:1990107">
    <property type="term" value="F:thiazole synthase activity"/>
    <property type="evidence" value="ECO:0007669"/>
    <property type="project" value="UniProtKB-EC"/>
</dbReference>
<dbReference type="GO" id="GO:0009229">
    <property type="term" value="P:thiamine diphosphate biosynthetic process"/>
    <property type="evidence" value="ECO:0007669"/>
    <property type="project" value="UniProtKB-UniRule"/>
</dbReference>
<dbReference type="CDD" id="cd04728">
    <property type="entry name" value="ThiG"/>
    <property type="match status" value="1"/>
</dbReference>
<dbReference type="Gene3D" id="3.20.20.70">
    <property type="entry name" value="Aldolase class I"/>
    <property type="match status" value="1"/>
</dbReference>
<dbReference type="HAMAP" id="MF_00443">
    <property type="entry name" value="ThiG"/>
    <property type="match status" value="1"/>
</dbReference>
<dbReference type="InterPro" id="IPR013785">
    <property type="entry name" value="Aldolase_TIM"/>
</dbReference>
<dbReference type="InterPro" id="IPR033983">
    <property type="entry name" value="Thiazole_synthase_ThiG"/>
</dbReference>
<dbReference type="InterPro" id="IPR008867">
    <property type="entry name" value="ThiG"/>
</dbReference>
<dbReference type="PANTHER" id="PTHR34266">
    <property type="entry name" value="THIAZOLE SYNTHASE"/>
    <property type="match status" value="1"/>
</dbReference>
<dbReference type="PANTHER" id="PTHR34266:SF2">
    <property type="entry name" value="THIAZOLE SYNTHASE"/>
    <property type="match status" value="1"/>
</dbReference>
<dbReference type="Pfam" id="PF05690">
    <property type="entry name" value="ThiG"/>
    <property type="match status" value="1"/>
</dbReference>
<dbReference type="SUPFAM" id="SSF110399">
    <property type="entry name" value="ThiG-like"/>
    <property type="match status" value="1"/>
</dbReference>
<organism>
    <name type="scientific">Pseudomonas aeruginosa (strain LESB58)</name>
    <dbReference type="NCBI Taxonomy" id="557722"/>
    <lineage>
        <taxon>Bacteria</taxon>
        <taxon>Pseudomonadati</taxon>
        <taxon>Pseudomonadota</taxon>
        <taxon>Gammaproteobacteria</taxon>
        <taxon>Pseudomonadales</taxon>
        <taxon>Pseudomonadaceae</taxon>
        <taxon>Pseudomonas</taxon>
    </lineage>
</organism>
<feature type="chain" id="PRO_1000196886" description="Thiazole synthase">
    <location>
        <begin position="1"/>
        <end position="265"/>
    </location>
</feature>
<feature type="active site" description="Schiff-base intermediate with DXP" evidence="1">
    <location>
        <position position="107"/>
    </location>
</feature>
<feature type="binding site" evidence="1">
    <location>
        <position position="168"/>
    </location>
    <ligand>
        <name>1-deoxy-D-xylulose 5-phosphate</name>
        <dbReference type="ChEBI" id="CHEBI:57792"/>
    </ligand>
</feature>
<feature type="binding site" evidence="1">
    <location>
        <begin position="194"/>
        <end position="195"/>
    </location>
    <ligand>
        <name>1-deoxy-D-xylulose 5-phosphate</name>
        <dbReference type="ChEBI" id="CHEBI:57792"/>
    </ligand>
</feature>
<feature type="binding site" evidence="1">
    <location>
        <begin position="216"/>
        <end position="217"/>
    </location>
    <ligand>
        <name>1-deoxy-D-xylulose 5-phosphate</name>
        <dbReference type="ChEBI" id="CHEBI:57792"/>
    </ligand>
</feature>
<evidence type="ECO:0000255" key="1">
    <source>
        <dbReference type="HAMAP-Rule" id="MF_00443"/>
    </source>
</evidence>
<comment type="function">
    <text evidence="1">Catalyzes the rearrangement of 1-deoxy-D-xylulose 5-phosphate (DXP) to produce the thiazole phosphate moiety of thiamine. Sulfur is provided by the thiocarboxylate moiety of the carrier protein ThiS. In vitro, sulfur can be provided by H(2)S.</text>
</comment>
<comment type="catalytic activity">
    <reaction evidence="1">
        <text>[ThiS sulfur-carrier protein]-C-terminal-Gly-aminoethanethioate + 2-iminoacetate + 1-deoxy-D-xylulose 5-phosphate = [ThiS sulfur-carrier protein]-C-terminal Gly-Gly + 2-[(2R,5Z)-2-carboxy-4-methylthiazol-5(2H)-ylidene]ethyl phosphate + 2 H2O + H(+)</text>
        <dbReference type="Rhea" id="RHEA:26297"/>
        <dbReference type="Rhea" id="RHEA-COMP:12909"/>
        <dbReference type="Rhea" id="RHEA-COMP:19908"/>
        <dbReference type="ChEBI" id="CHEBI:15377"/>
        <dbReference type="ChEBI" id="CHEBI:15378"/>
        <dbReference type="ChEBI" id="CHEBI:57792"/>
        <dbReference type="ChEBI" id="CHEBI:62899"/>
        <dbReference type="ChEBI" id="CHEBI:77846"/>
        <dbReference type="ChEBI" id="CHEBI:90778"/>
        <dbReference type="ChEBI" id="CHEBI:232372"/>
        <dbReference type="EC" id="2.8.1.10"/>
    </reaction>
</comment>
<comment type="pathway">
    <text evidence="1">Cofactor biosynthesis; thiamine diphosphate biosynthesis.</text>
</comment>
<comment type="subunit">
    <text evidence="1">Homotetramer. Forms heterodimers with either ThiH or ThiS.</text>
</comment>
<comment type="subcellular location">
    <subcellularLocation>
        <location evidence="1">Cytoplasm</location>
    </subcellularLocation>
</comment>
<comment type="similarity">
    <text evidence="1">Belongs to the ThiG family.</text>
</comment>
<name>THIG_PSEA8</name>